<organism>
    <name type="scientific">Aedes aegypti</name>
    <name type="common">Yellowfever mosquito</name>
    <name type="synonym">Culex aegypti</name>
    <dbReference type="NCBI Taxonomy" id="7159"/>
    <lineage>
        <taxon>Eukaryota</taxon>
        <taxon>Metazoa</taxon>
        <taxon>Ecdysozoa</taxon>
        <taxon>Arthropoda</taxon>
        <taxon>Hexapoda</taxon>
        <taxon>Insecta</taxon>
        <taxon>Pterygota</taxon>
        <taxon>Neoptera</taxon>
        <taxon>Endopterygota</taxon>
        <taxon>Diptera</taxon>
        <taxon>Nematocera</taxon>
        <taxon>Culicoidea</taxon>
        <taxon>Culicidae</taxon>
        <taxon>Culicinae</taxon>
        <taxon>Aedini</taxon>
        <taxon>Aedes</taxon>
        <taxon>Stegomyia</taxon>
    </lineage>
</organism>
<proteinExistence type="inferred from homology"/>
<dbReference type="EMBL" id="CH477340">
    <property type="protein sequence ID" value="EAT43106.1"/>
    <property type="molecule type" value="Genomic_DNA"/>
</dbReference>
<dbReference type="RefSeq" id="XP_001650844.1">
    <property type="nucleotide sequence ID" value="XM_001650794.1"/>
</dbReference>
<dbReference type="SMR" id="Q17A58"/>
<dbReference type="FunCoup" id="Q17A58">
    <property type="interactions" value="973"/>
</dbReference>
<dbReference type="STRING" id="7159.Q17A58"/>
<dbReference type="PaxDb" id="7159-AAEL005419-PA"/>
<dbReference type="GeneID" id="5566462"/>
<dbReference type="KEGG" id="aag:5566462"/>
<dbReference type="CTD" id="41719"/>
<dbReference type="VEuPathDB" id="VectorBase:AAEL005419"/>
<dbReference type="eggNOG" id="KOG1747">
    <property type="taxonomic scope" value="Eukaryota"/>
</dbReference>
<dbReference type="HOGENOM" id="CLU_031995_0_1_1"/>
<dbReference type="InParanoid" id="Q17A58"/>
<dbReference type="OMA" id="YLFKHTH"/>
<dbReference type="OrthoDB" id="10006997at2759"/>
<dbReference type="PhylomeDB" id="Q17A58"/>
<dbReference type="Proteomes" id="UP000008820">
    <property type="component" value="Unassembled WGS sequence"/>
</dbReference>
<dbReference type="Proteomes" id="UP000682892">
    <property type="component" value="Unassembled WGS sequence"/>
</dbReference>
<dbReference type="GO" id="GO:0005884">
    <property type="term" value="C:actin filament"/>
    <property type="evidence" value="ECO:0007669"/>
    <property type="project" value="TreeGrafter"/>
</dbReference>
<dbReference type="GO" id="GO:0005938">
    <property type="term" value="C:cell cortex"/>
    <property type="evidence" value="ECO:0007669"/>
    <property type="project" value="UniProtKB-SubCell"/>
</dbReference>
<dbReference type="GO" id="GO:0030016">
    <property type="term" value="C:myofibril"/>
    <property type="evidence" value="ECO:0007669"/>
    <property type="project" value="TreeGrafter"/>
</dbReference>
<dbReference type="GO" id="GO:0051015">
    <property type="term" value="F:actin filament binding"/>
    <property type="evidence" value="ECO:0007669"/>
    <property type="project" value="TreeGrafter"/>
</dbReference>
<dbReference type="GO" id="GO:0003785">
    <property type="term" value="F:actin monomer binding"/>
    <property type="evidence" value="ECO:0007669"/>
    <property type="project" value="TreeGrafter"/>
</dbReference>
<dbReference type="GO" id="GO:0030042">
    <property type="term" value="P:actin filament depolymerization"/>
    <property type="evidence" value="ECO:0007669"/>
    <property type="project" value="TreeGrafter"/>
</dbReference>
<dbReference type="GO" id="GO:0051016">
    <property type="term" value="P:barbed-end actin filament capping"/>
    <property type="evidence" value="ECO:0007669"/>
    <property type="project" value="TreeGrafter"/>
</dbReference>
<dbReference type="GO" id="GO:0010976">
    <property type="term" value="P:positive regulation of neuron projection development"/>
    <property type="evidence" value="ECO:0007669"/>
    <property type="project" value="TreeGrafter"/>
</dbReference>
<dbReference type="GO" id="GO:0010591">
    <property type="term" value="P:regulation of lamellipodium assembly"/>
    <property type="evidence" value="ECO:0007669"/>
    <property type="project" value="TreeGrafter"/>
</dbReference>
<dbReference type="CDD" id="cd11284">
    <property type="entry name" value="ADF_Twf-C_like"/>
    <property type="match status" value="1"/>
</dbReference>
<dbReference type="CDD" id="cd11285">
    <property type="entry name" value="ADF_Twf-N_like"/>
    <property type="match status" value="1"/>
</dbReference>
<dbReference type="FunFam" id="3.40.20.10:FF:000042">
    <property type="entry name" value="Actin depolymerizing protein"/>
    <property type="match status" value="1"/>
</dbReference>
<dbReference type="FunFam" id="3.40.20.10:FF:000007">
    <property type="entry name" value="Twinfilin-1 isoform 1"/>
    <property type="match status" value="1"/>
</dbReference>
<dbReference type="Gene3D" id="3.40.20.10">
    <property type="entry name" value="Severin"/>
    <property type="match status" value="2"/>
</dbReference>
<dbReference type="InterPro" id="IPR002108">
    <property type="entry name" value="ADF-H"/>
</dbReference>
<dbReference type="InterPro" id="IPR029006">
    <property type="entry name" value="ADF-H/Gelsolin-like_dom_sf"/>
</dbReference>
<dbReference type="InterPro" id="IPR028458">
    <property type="entry name" value="Twinfilin"/>
</dbReference>
<dbReference type="PANTHER" id="PTHR13759">
    <property type="entry name" value="TWINFILIN"/>
    <property type="match status" value="1"/>
</dbReference>
<dbReference type="PANTHER" id="PTHR13759:SF1">
    <property type="entry name" value="TWINFILIN"/>
    <property type="match status" value="1"/>
</dbReference>
<dbReference type="Pfam" id="PF00241">
    <property type="entry name" value="Cofilin_ADF"/>
    <property type="match status" value="2"/>
</dbReference>
<dbReference type="SMART" id="SM00102">
    <property type="entry name" value="ADF"/>
    <property type="match status" value="2"/>
</dbReference>
<dbReference type="SUPFAM" id="SSF55753">
    <property type="entry name" value="Actin depolymerizing proteins"/>
    <property type="match status" value="2"/>
</dbReference>
<dbReference type="PROSITE" id="PS51263">
    <property type="entry name" value="ADF_H"/>
    <property type="match status" value="2"/>
</dbReference>
<evidence type="ECO:0000250" key="1"/>
<evidence type="ECO:0000255" key="2">
    <source>
        <dbReference type="PROSITE-ProRule" id="PRU00599"/>
    </source>
</evidence>
<evidence type="ECO:0000256" key="3">
    <source>
        <dbReference type="SAM" id="MobiDB-lite"/>
    </source>
</evidence>
<evidence type="ECO:0000305" key="4"/>
<gene>
    <name type="primary">twf</name>
    <name type="ORF">AAEL005419</name>
</gene>
<reference key="1">
    <citation type="journal article" date="2007" name="Science">
        <title>Genome sequence of Aedes aegypti, a major arbovirus vector.</title>
        <authorList>
            <person name="Nene V."/>
            <person name="Wortman J.R."/>
            <person name="Lawson D."/>
            <person name="Haas B.J."/>
            <person name="Kodira C.D."/>
            <person name="Tu Z.J."/>
            <person name="Loftus B.J."/>
            <person name="Xi Z."/>
            <person name="Megy K."/>
            <person name="Grabherr M."/>
            <person name="Ren Q."/>
            <person name="Zdobnov E.M."/>
            <person name="Lobo N.F."/>
            <person name="Campbell K.S."/>
            <person name="Brown S.E."/>
            <person name="Bonaldo M.F."/>
            <person name="Zhu J."/>
            <person name="Sinkins S.P."/>
            <person name="Hogenkamp D.G."/>
            <person name="Amedeo P."/>
            <person name="Arensburger P."/>
            <person name="Atkinson P.W."/>
            <person name="Bidwell S.L."/>
            <person name="Biedler J."/>
            <person name="Birney E."/>
            <person name="Bruggner R.V."/>
            <person name="Costas J."/>
            <person name="Coy M.R."/>
            <person name="Crabtree J."/>
            <person name="Crawford M."/>
            <person name="DeBruyn B."/>
            <person name="DeCaprio D."/>
            <person name="Eiglmeier K."/>
            <person name="Eisenstadt E."/>
            <person name="El-Dorry H."/>
            <person name="Gelbart W.M."/>
            <person name="Gomes S.L."/>
            <person name="Hammond M."/>
            <person name="Hannick L.I."/>
            <person name="Hogan J.R."/>
            <person name="Holmes M.H."/>
            <person name="Jaffe D."/>
            <person name="Johnston S.J."/>
            <person name="Kennedy R.C."/>
            <person name="Koo H."/>
            <person name="Kravitz S."/>
            <person name="Kriventseva E.V."/>
            <person name="Kulp D."/>
            <person name="Labutti K."/>
            <person name="Lee E."/>
            <person name="Li S."/>
            <person name="Lovin D.D."/>
            <person name="Mao C."/>
            <person name="Mauceli E."/>
            <person name="Menck C.F."/>
            <person name="Miller J.R."/>
            <person name="Montgomery P."/>
            <person name="Mori A."/>
            <person name="Nascimento A.L."/>
            <person name="Naveira H.F."/>
            <person name="Nusbaum C."/>
            <person name="O'Leary S.B."/>
            <person name="Orvis J."/>
            <person name="Pertea M."/>
            <person name="Quesneville H."/>
            <person name="Reidenbach K.R."/>
            <person name="Rogers Y.-H.C."/>
            <person name="Roth C.W."/>
            <person name="Schneider J.R."/>
            <person name="Schatz M."/>
            <person name="Shumway M."/>
            <person name="Stanke M."/>
            <person name="Stinson E.O."/>
            <person name="Tubio J.M.C."/>
            <person name="Vanzee J.P."/>
            <person name="Verjovski-Almeida S."/>
            <person name="Werner D."/>
            <person name="White O.R."/>
            <person name="Wyder S."/>
            <person name="Zeng Q."/>
            <person name="Zhao Q."/>
            <person name="Zhao Y."/>
            <person name="Hill C.A."/>
            <person name="Raikhel A.S."/>
            <person name="Soares M.B."/>
            <person name="Knudson D.L."/>
            <person name="Lee N.H."/>
            <person name="Galagan J."/>
            <person name="Salzberg S.L."/>
            <person name="Paulsen I.T."/>
            <person name="Dimopoulos G."/>
            <person name="Collins F.H."/>
            <person name="Bruce B."/>
            <person name="Fraser-Liggett C.M."/>
            <person name="Severson D.W."/>
        </authorList>
    </citation>
    <scope>NUCLEOTIDE SEQUENCE [LARGE SCALE GENOMIC DNA]</scope>
    <source>
        <strain>LVPib12</strain>
    </source>
</reference>
<keyword id="KW-0009">Actin-binding</keyword>
<keyword id="KW-0963">Cytoplasm</keyword>
<keyword id="KW-0206">Cytoskeleton</keyword>
<keyword id="KW-1185">Reference proteome</keyword>
<keyword id="KW-0677">Repeat</keyword>
<feature type="chain" id="PRO_0000308810" description="Twinfilin">
    <location>
        <begin position="1"/>
        <end position="343"/>
    </location>
</feature>
<feature type="domain" description="ADF-H 1" evidence="2">
    <location>
        <begin position="4"/>
        <end position="139"/>
    </location>
</feature>
<feature type="domain" description="ADF-H 2" evidence="2">
    <location>
        <begin position="177"/>
        <end position="312"/>
    </location>
</feature>
<feature type="region of interest" description="Disordered" evidence="3">
    <location>
        <begin position="317"/>
        <end position="343"/>
    </location>
</feature>
<accession>Q17A58</accession>
<protein>
    <recommendedName>
        <fullName>Twinfilin</fullName>
    </recommendedName>
</protein>
<sequence length="343" mass="39248">MSHQTGIKANAELLKFFGKCKDGKTRVLKVSIENEELALVDHKAVKKDWEKDYDALVKPLVEDDVPCYILYRLDYKIPTGYAWLLLSWVPEAATVRQKMLYASTKATLKLEFGSSNIKEEINATTKEETTLKGYQKHKIDFSAPAPLTSREEELAEIRKSEVKTDFGIDTKQQTLGGINCPISDPTSQALIDMRRGAYNYLQFRIDLEEEKIHVVNAANIDILKLPSQIPKDHARYHLYLFKHQHEGNHLDSVVFVYSMPGYTCSIRERMMYSSCKGPFSATIEKHGIEITKKIEIDNGEELTEEFIYEELHPRKLNLRPQFSKPKGPPSRGAKRLTKPQAVE</sequence>
<name>TWF_AEDAE</name>
<comment type="function">
    <text evidence="1">Actin-binding protein involved in motile and morphological processes. Inhibits actin polymerization, likely by sequestering G-actin (By similarity).</text>
</comment>
<comment type="subunit">
    <text evidence="1">Interacts with G-actin; ADP-actin form.</text>
</comment>
<comment type="subcellular location">
    <subcellularLocation>
        <location evidence="1">Cytoplasm</location>
        <location evidence="1">Cytoskeleton</location>
    </subcellularLocation>
    <subcellularLocation>
        <location evidence="1">Cytoplasm</location>
        <location evidence="1">Cell cortex</location>
    </subcellularLocation>
</comment>
<comment type="similarity">
    <text evidence="4">Belongs to the actin-binding proteins ADF family. Twinfilin subfamily.</text>
</comment>